<feature type="chain" id="PRO_0000384402" description="Protein translocase subunit SecDF">
    <location>
        <begin position="1"/>
        <end position="737"/>
    </location>
</feature>
<feature type="topological domain" description="Cytoplasmic" evidence="6">
    <location>
        <begin position="1"/>
        <end position="5"/>
    </location>
</feature>
<feature type="transmembrane region" description="Helical" evidence="2">
    <location>
        <begin position="6"/>
        <end position="26"/>
    </location>
</feature>
<feature type="topological domain" description="Extracellular" evidence="6">
    <location>
        <begin position="27"/>
        <end position="254"/>
    </location>
</feature>
<feature type="transmembrane region" description="Helical" evidence="2">
    <location>
        <begin position="255"/>
        <end position="275"/>
    </location>
</feature>
<feature type="topological domain" description="Cytoplasmic" evidence="6">
    <location>
        <begin position="276"/>
        <end position="278"/>
    </location>
</feature>
<feature type="transmembrane region" description="Helical" evidence="2">
    <location>
        <begin position="279"/>
        <end position="299"/>
    </location>
</feature>
<feature type="topological domain" description="Extracellular" evidence="6">
    <location>
        <begin position="300"/>
        <end position="301"/>
    </location>
</feature>
<feature type="transmembrane region" description="Helical" evidence="2">
    <location>
        <begin position="302"/>
        <end position="322"/>
    </location>
</feature>
<feature type="topological domain" description="Cytoplasmic" evidence="6">
    <location>
        <begin position="323"/>
        <end position="353"/>
    </location>
</feature>
<feature type="transmembrane region" description="Helical" evidence="2">
    <location>
        <begin position="354"/>
        <end position="374"/>
    </location>
</feature>
<feature type="topological domain" description="Extracellular" evidence="6">
    <location>
        <begin position="375"/>
        <end position="380"/>
    </location>
</feature>
<feature type="transmembrane region" description="Helical" evidence="2">
    <location>
        <begin position="381"/>
        <end position="401"/>
    </location>
</feature>
<feature type="topological domain" description="Cytoplasmic" evidence="6">
    <location>
        <begin position="402"/>
        <end position="453"/>
    </location>
</feature>
<feature type="transmembrane region" description="Helical" evidence="2">
    <location>
        <begin position="454"/>
        <end position="474"/>
    </location>
</feature>
<feature type="topological domain" description="Extracellular" evidence="6">
    <location>
        <begin position="475"/>
        <end position="569"/>
    </location>
</feature>
<feature type="transmembrane region" description="Helical" evidence="2">
    <location>
        <begin position="570"/>
        <end position="590"/>
    </location>
</feature>
<feature type="topological domain" description="Cytoplasmic" evidence="6">
    <location>
        <begin position="591"/>
        <end position="593"/>
    </location>
</feature>
<feature type="transmembrane region" description="Helical" evidence="2">
    <location>
        <begin position="594"/>
        <end position="614"/>
    </location>
</feature>
<feature type="topological domain" description="Extracellular" evidence="6">
    <location>
        <begin position="615"/>
        <end position="621"/>
    </location>
</feature>
<feature type="transmembrane region" description="Helical" evidence="2">
    <location>
        <begin position="622"/>
        <end position="642"/>
    </location>
</feature>
<feature type="topological domain" description="Cytoplasmic" evidence="6">
    <location>
        <begin position="643"/>
        <end position="677"/>
    </location>
</feature>
<feature type="transmembrane region" description="Helical" evidence="2">
    <location>
        <begin position="678"/>
        <end position="698"/>
    </location>
</feature>
<feature type="topological domain" description="Extracellular" evidence="6">
    <location>
        <position position="699"/>
    </location>
</feature>
<feature type="transmembrane region" description="Helical" evidence="2">
    <location>
        <begin position="700"/>
        <end position="720"/>
    </location>
</feature>
<feature type="topological domain" description="Cytoplasmic" evidence="4">
    <location>
        <begin position="721"/>
        <end position="737"/>
    </location>
</feature>
<feature type="region of interest" description="SecD">
    <location>
        <begin position="1"/>
        <end position="416"/>
    </location>
</feature>
<feature type="region of interest" description="SecF">
    <location>
        <begin position="446"/>
        <end position="737"/>
    </location>
</feature>
<comment type="function">
    <text evidence="4">Required for efficient translocation of secretory pre-proteins under conditions of hypersecretion but is not required for the release of mature proteins from the membrane.</text>
</comment>
<comment type="function">
    <text evidence="1">Part of the Sec protein translocase complex. Interacts with the SecYEG preprotein conducting channel. SecDF uses the proton motive force (PMF) to complete protein translocation after the ATP-dependent function of SecA (By similarity).</text>
</comment>
<comment type="subunit">
    <text evidence="1">Part of the essential Sec protein translocation apparatus which comprises SecA, SecYEG and auxiliary protein SecDF. Other proteins may also be involved (By similarity).</text>
</comment>
<comment type="subcellular location">
    <subcellularLocation>
        <location evidence="3">Cell membrane</location>
        <topology evidence="3">Multi-pass membrane protein</topology>
    </subcellularLocation>
    <text>Found uniformly distributed in both the mother cell and forespore following sporulation.</text>
</comment>
<comment type="induction">
    <text evidence="4">Shows maximal expression at the beginning of post-exponential growth phase and increased expression by glucose in the post-exponential growth phase when cells are cultured on rich medium. Expressed constitutively during growth in minimal medium.</text>
</comment>
<comment type="disruption phenotype">
    <text evidence="4">Cells lacking this gene show a cold-sensitive phenotype and a filamentous morphology.</text>
</comment>
<comment type="similarity">
    <text evidence="5">In the N-terminal section; belongs to the SecD/SecF family. SecD subfamily.</text>
</comment>
<comment type="similarity">
    <text evidence="5">In the C-terminal section; belongs to the SecD/SecF family. SecF subfamily.</text>
</comment>
<accession>O32047</accession>
<reference key="1">
    <citation type="journal article" date="1998" name="J. Biol. Chem.">
        <title>SecDF of Bacillus subtilis, a molecular Siamese twin required for the efficient secretion of proteins.</title>
        <authorList>
            <person name="Bolhuis A."/>
            <person name="Broekhuizen C.P."/>
            <person name="Sorokin A."/>
            <person name="van Roosmalen M.L."/>
            <person name="Venema G."/>
            <person name="Bron S."/>
            <person name="Quax W.J."/>
            <person name="van Dijl J.M."/>
        </authorList>
    </citation>
    <scope>NUCLEOTIDE SEQUENCE [GENOMIC DNA]</scope>
    <scope>FUNCTION IN PROTEIN SECRETION</scope>
    <scope>TOPOLOGY</scope>
    <scope>INDUCTION</scope>
    <scope>DISRUPTION PHENOTYPE</scope>
    <source>
        <strain>168</strain>
    </source>
</reference>
<reference key="2">
    <citation type="journal article" date="1997" name="Nature">
        <title>The complete genome sequence of the Gram-positive bacterium Bacillus subtilis.</title>
        <authorList>
            <person name="Kunst F."/>
            <person name="Ogasawara N."/>
            <person name="Moszer I."/>
            <person name="Albertini A.M."/>
            <person name="Alloni G."/>
            <person name="Azevedo V."/>
            <person name="Bertero M.G."/>
            <person name="Bessieres P."/>
            <person name="Bolotin A."/>
            <person name="Borchert S."/>
            <person name="Borriss R."/>
            <person name="Boursier L."/>
            <person name="Brans A."/>
            <person name="Braun M."/>
            <person name="Brignell S.C."/>
            <person name="Bron S."/>
            <person name="Brouillet S."/>
            <person name="Bruschi C.V."/>
            <person name="Caldwell B."/>
            <person name="Capuano V."/>
            <person name="Carter N.M."/>
            <person name="Choi S.-K."/>
            <person name="Codani J.-J."/>
            <person name="Connerton I.F."/>
            <person name="Cummings N.J."/>
            <person name="Daniel R.A."/>
            <person name="Denizot F."/>
            <person name="Devine K.M."/>
            <person name="Duesterhoeft A."/>
            <person name="Ehrlich S.D."/>
            <person name="Emmerson P.T."/>
            <person name="Entian K.-D."/>
            <person name="Errington J."/>
            <person name="Fabret C."/>
            <person name="Ferrari E."/>
            <person name="Foulger D."/>
            <person name="Fritz C."/>
            <person name="Fujita M."/>
            <person name="Fujita Y."/>
            <person name="Fuma S."/>
            <person name="Galizzi A."/>
            <person name="Galleron N."/>
            <person name="Ghim S.-Y."/>
            <person name="Glaser P."/>
            <person name="Goffeau A."/>
            <person name="Golightly E.J."/>
            <person name="Grandi G."/>
            <person name="Guiseppi G."/>
            <person name="Guy B.J."/>
            <person name="Haga K."/>
            <person name="Haiech J."/>
            <person name="Harwood C.R."/>
            <person name="Henaut A."/>
            <person name="Hilbert H."/>
            <person name="Holsappel S."/>
            <person name="Hosono S."/>
            <person name="Hullo M.-F."/>
            <person name="Itaya M."/>
            <person name="Jones L.-M."/>
            <person name="Joris B."/>
            <person name="Karamata D."/>
            <person name="Kasahara Y."/>
            <person name="Klaerr-Blanchard M."/>
            <person name="Klein C."/>
            <person name="Kobayashi Y."/>
            <person name="Koetter P."/>
            <person name="Koningstein G."/>
            <person name="Krogh S."/>
            <person name="Kumano M."/>
            <person name="Kurita K."/>
            <person name="Lapidus A."/>
            <person name="Lardinois S."/>
            <person name="Lauber J."/>
            <person name="Lazarevic V."/>
            <person name="Lee S.-M."/>
            <person name="Levine A."/>
            <person name="Liu H."/>
            <person name="Masuda S."/>
            <person name="Mauel C."/>
            <person name="Medigue C."/>
            <person name="Medina N."/>
            <person name="Mellado R.P."/>
            <person name="Mizuno M."/>
            <person name="Moestl D."/>
            <person name="Nakai S."/>
            <person name="Noback M."/>
            <person name="Noone D."/>
            <person name="O'Reilly M."/>
            <person name="Ogawa K."/>
            <person name="Ogiwara A."/>
            <person name="Oudega B."/>
            <person name="Park S.-H."/>
            <person name="Parro V."/>
            <person name="Pohl T.M."/>
            <person name="Portetelle D."/>
            <person name="Porwollik S."/>
            <person name="Prescott A.M."/>
            <person name="Presecan E."/>
            <person name="Pujic P."/>
            <person name="Purnelle B."/>
            <person name="Rapoport G."/>
            <person name="Rey M."/>
            <person name="Reynolds S."/>
            <person name="Rieger M."/>
            <person name="Rivolta C."/>
            <person name="Rocha E."/>
            <person name="Roche B."/>
            <person name="Rose M."/>
            <person name="Sadaie Y."/>
            <person name="Sato T."/>
            <person name="Scanlan E."/>
            <person name="Schleich S."/>
            <person name="Schroeter R."/>
            <person name="Scoffone F."/>
            <person name="Sekiguchi J."/>
            <person name="Sekowska A."/>
            <person name="Seror S.J."/>
            <person name="Serror P."/>
            <person name="Shin B.-S."/>
            <person name="Soldo B."/>
            <person name="Sorokin A."/>
            <person name="Tacconi E."/>
            <person name="Takagi T."/>
            <person name="Takahashi H."/>
            <person name="Takemaru K."/>
            <person name="Takeuchi M."/>
            <person name="Tamakoshi A."/>
            <person name="Tanaka T."/>
            <person name="Terpstra P."/>
            <person name="Tognoni A."/>
            <person name="Tosato V."/>
            <person name="Uchiyama S."/>
            <person name="Vandenbol M."/>
            <person name="Vannier F."/>
            <person name="Vassarotti A."/>
            <person name="Viari A."/>
            <person name="Wambutt R."/>
            <person name="Wedler E."/>
            <person name="Wedler H."/>
            <person name="Weitzenegger T."/>
            <person name="Winters P."/>
            <person name="Wipat A."/>
            <person name="Yamamoto H."/>
            <person name="Yamane K."/>
            <person name="Yasumoto K."/>
            <person name="Yata K."/>
            <person name="Yoshida K."/>
            <person name="Yoshikawa H.-F."/>
            <person name="Zumstein E."/>
            <person name="Yoshikawa H."/>
            <person name="Danchin A."/>
        </authorList>
    </citation>
    <scope>NUCLEOTIDE SEQUENCE [LARGE SCALE GENOMIC DNA]</scope>
    <source>
        <strain>168</strain>
    </source>
</reference>
<reference key="3">
    <citation type="journal article" date="2001" name="FEMS Microbiol. Rev.">
        <title>Translocation of proteins across the cell envelope of Gram-positive bacteria.</title>
        <authorList>
            <person name="van Wely K.H.M."/>
            <person name="Swaving J."/>
            <person name="Freudl R."/>
            <person name="Driessen A.J.M."/>
        </authorList>
    </citation>
    <scope>SUBUNIT</scope>
</reference>
<reference key="4">
    <citation type="journal article" date="2005" name="J. Bacteriol.">
        <title>Localization of translocation complex components in Bacillus subtilis: enrichment of the signal recognition particle receptor at early sporulation septa.</title>
        <authorList>
            <person name="Rubio A."/>
            <person name="Jiang X."/>
            <person name="Pogliano K."/>
        </authorList>
    </citation>
    <scope>SUBCELLULAR LOCATION</scope>
    <source>
        <strain>168 / PY79</strain>
    </source>
</reference>
<keyword id="KW-1003">Cell membrane</keyword>
<keyword id="KW-0472">Membrane</keyword>
<keyword id="KW-0653">Protein transport</keyword>
<keyword id="KW-1185">Reference proteome</keyword>
<keyword id="KW-0811">Translocation</keyword>
<keyword id="KW-0812">Transmembrane</keyword>
<keyword id="KW-1133">Transmembrane helix</keyword>
<keyword id="KW-0813">Transport</keyword>
<protein>
    <recommendedName>
        <fullName>Protein translocase subunit SecDF</fullName>
    </recommendedName>
</protein>
<gene>
    <name type="primary">secDF</name>
    <name type="ordered locus">BSU27650</name>
</gene>
<evidence type="ECO:0000250" key="1"/>
<evidence type="ECO:0000255" key="2"/>
<evidence type="ECO:0000269" key="3">
    <source>
    </source>
</evidence>
<evidence type="ECO:0000269" key="4">
    <source>
    </source>
</evidence>
<evidence type="ECO:0000305" key="5"/>
<evidence type="ECO:0000305" key="6">
    <source>
    </source>
</evidence>
<organism>
    <name type="scientific">Bacillus subtilis (strain 168)</name>
    <dbReference type="NCBI Taxonomy" id="224308"/>
    <lineage>
        <taxon>Bacteria</taxon>
        <taxon>Bacillati</taxon>
        <taxon>Bacillota</taxon>
        <taxon>Bacilli</taxon>
        <taxon>Bacillales</taxon>
        <taxon>Bacillaceae</taxon>
        <taxon>Bacillus</taxon>
    </lineage>
</organism>
<name>SECDF_BACSU</name>
<proteinExistence type="evidence at protein level"/>
<dbReference type="EMBL" id="AF024506">
    <property type="protein sequence ID" value="AAC31122.1"/>
    <property type="molecule type" value="Genomic_DNA"/>
</dbReference>
<dbReference type="EMBL" id="AL009126">
    <property type="protein sequence ID" value="CAB14724.2"/>
    <property type="molecule type" value="Genomic_DNA"/>
</dbReference>
<dbReference type="PIR" id="H69704">
    <property type="entry name" value="H69704"/>
</dbReference>
<dbReference type="RefSeq" id="NP_390643.1">
    <property type="nucleotide sequence ID" value="NC_000964.3"/>
</dbReference>
<dbReference type="RefSeq" id="WP_003245970.1">
    <property type="nucleotide sequence ID" value="NZ_OZ025638.1"/>
</dbReference>
<dbReference type="SMR" id="O32047"/>
<dbReference type="FunCoup" id="O32047">
    <property type="interactions" value="187"/>
</dbReference>
<dbReference type="STRING" id="224308.BSU27650"/>
<dbReference type="TCDB" id="2.A.6.4.2">
    <property type="family name" value="the resistance-nodulation-cell division (rnd) superfamily"/>
</dbReference>
<dbReference type="TCDB" id="3.A.5.2.1">
    <property type="family name" value="the general secretory pathway (sec) family"/>
</dbReference>
<dbReference type="jPOST" id="O32047"/>
<dbReference type="PaxDb" id="224308-BSU27650"/>
<dbReference type="EnsemblBacteria" id="CAB14724">
    <property type="protein sequence ID" value="CAB14724"/>
    <property type="gene ID" value="BSU_27650"/>
</dbReference>
<dbReference type="GeneID" id="937938"/>
<dbReference type="KEGG" id="bsu:BSU27650"/>
<dbReference type="PATRIC" id="fig|224308.179.peg.3004"/>
<dbReference type="eggNOG" id="COG0341">
    <property type="taxonomic scope" value="Bacteria"/>
</dbReference>
<dbReference type="eggNOG" id="COG0342">
    <property type="taxonomic scope" value="Bacteria"/>
</dbReference>
<dbReference type="InParanoid" id="O32047"/>
<dbReference type="OrthoDB" id="9805019at2"/>
<dbReference type="PhylomeDB" id="O32047"/>
<dbReference type="BioCyc" id="BSUB:BSU27650-MONOMER"/>
<dbReference type="Proteomes" id="UP000001570">
    <property type="component" value="Chromosome"/>
</dbReference>
<dbReference type="GO" id="GO:0005886">
    <property type="term" value="C:plasma membrane"/>
    <property type="evidence" value="ECO:0000318"/>
    <property type="project" value="GO_Central"/>
</dbReference>
<dbReference type="GO" id="GO:0015450">
    <property type="term" value="F:protein-transporting ATPase activity"/>
    <property type="evidence" value="ECO:0007669"/>
    <property type="project" value="InterPro"/>
</dbReference>
<dbReference type="GO" id="GO:0065002">
    <property type="term" value="P:intracellular protein transmembrane transport"/>
    <property type="evidence" value="ECO:0007669"/>
    <property type="project" value="UniProtKB-UniRule"/>
</dbReference>
<dbReference type="GO" id="GO:0006605">
    <property type="term" value="P:protein targeting"/>
    <property type="evidence" value="ECO:0007669"/>
    <property type="project" value="UniProtKB-UniRule"/>
</dbReference>
<dbReference type="GO" id="GO:0015031">
    <property type="term" value="P:protein transport"/>
    <property type="evidence" value="ECO:0000318"/>
    <property type="project" value="GO_Central"/>
</dbReference>
<dbReference type="GO" id="GO:0043952">
    <property type="term" value="P:protein transport by the Sec complex"/>
    <property type="evidence" value="ECO:0007669"/>
    <property type="project" value="UniProtKB-UniRule"/>
</dbReference>
<dbReference type="FunFam" id="1.20.1640.10:FF:000024">
    <property type="entry name" value="Multifunctional fusion protein"/>
    <property type="match status" value="1"/>
</dbReference>
<dbReference type="FunFam" id="3.30.70.3220:FF:000001">
    <property type="entry name" value="Multifunctional fusion protein"/>
    <property type="match status" value="1"/>
</dbReference>
<dbReference type="FunFam" id="1.20.1640.10:FF:000004">
    <property type="entry name" value="Protein translocase subunit SecD"/>
    <property type="match status" value="1"/>
</dbReference>
<dbReference type="Gene3D" id="3.30.70.3220">
    <property type="match status" value="1"/>
</dbReference>
<dbReference type="Gene3D" id="1.20.1640.10">
    <property type="entry name" value="Multidrug efflux transporter AcrB transmembrane domain"/>
    <property type="match status" value="2"/>
</dbReference>
<dbReference type="HAMAP" id="MF_01463_B">
    <property type="entry name" value="SecD_B"/>
    <property type="match status" value="1"/>
</dbReference>
<dbReference type="HAMAP" id="MF_01464_B">
    <property type="entry name" value="SecF_B"/>
    <property type="match status" value="1"/>
</dbReference>
<dbReference type="InterPro" id="IPR005791">
    <property type="entry name" value="SecD"/>
</dbReference>
<dbReference type="InterPro" id="IPR022813">
    <property type="entry name" value="SecD/SecF_arch_bac"/>
</dbReference>
<dbReference type="InterPro" id="IPR022645">
    <property type="entry name" value="SecD/SecF_bac"/>
</dbReference>
<dbReference type="InterPro" id="IPR022646">
    <property type="entry name" value="SecD/SecF_CS"/>
</dbReference>
<dbReference type="InterPro" id="IPR048631">
    <property type="entry name" value="SecD_1st"/>
</dbReference>
<dbReference type="InterPro" id="IPR048634">
    <property type="entry name" value="SecD_SecF_C"/>
</dbReference>
<dbReference type="InterPro" id="IPR055344">
    <property type="entry name" value="SecD_SecF_C_bact"/>
</dbReference>
<dbReference type="InterPro" id="IPR054384">
    <property type="entry name" value="SecDF_P1_head"/>
</dbReference>
<dbReference type="InterPro" id="IPR005665">
    <property type="entry name" value="SecF_bac"/>
</dbReference>
<dbReference type="NCBIfam" id="TIGR00916">
    <property type="entry name" value="2A0604s01"/>
    <property type="match status" value="2"/>
</dbReference>
<dbReference type="NCBIfam" id="NF009581">
    <property type="entry name" value="PRK13024.1-1"/>
    <property type="match status" value="1"/>
</dbReference>
<dbReference type="NCBIfam" id="TIGR01129">
    <property type="entry name" value="secD"/>
    <property type="match status" value="1"/>
</dbReference>
<dbReference type="NCBIfam" id="TIGR00966">
    <property type="entry name" value="transloc_SecF"/>
    <property type="match status" value="1"/>
</dbReference>
<dbReference type="PANTHER" id="PTHR30081:SF1">
    <property type="entry name" value="PROTEIN TRANSLOCASE SUBUNIT SECD"/>
    <property type="match status" value="1"/>
</dbReference>
<dbReference type="PANTHER" id="PTHR30081">
    <property type="entry name" value="PROTEIN-EXPORT MEMBRANE PROTEIN SEC"/>
    <property type="match status" value="1"/>
</dbReference>
<dbReference type="Pfam" id="PF07549">
    <property type="entry name" value="Sec_GG"/>
    <property type="match status" value="1"/>
</dbReference>
<dbReference type="Pfam" id="PF21760">
    <property type="entry name" value="SecD_1st"/>
    <property type="match status" value="1"/>
</dbReference>
<dbReference type="Pfam" id="PF02355">
    <property type="entry name" value="SecD_SecF_C"/>
    <property type="match status" value="2"/>
</dbReference>
<dbReference type="Pfam" id="PF22599">
    <property type="entry name" value="SecDF_P1_head"/>
    <property type="match status" value="1"/>
</dbReference>
<dbReference type="PRINTS" id="PR01755">
    <property type="entry name" value="SECFTRNLCASE"/>
</dbReference>
<dbReference type="SUPFAM" id="SSF82866">
    <property type="entry name" value="Multidrug efflux transporter AcrB transmembrane domain"/>
    <property type="match status" value="2"/>
</dbReference>
<sequence>MKKGRLIAFFLFVLLIGTGLGYFTKPAANNITLGLDLQGGFEVLYDVQPVKKGDKITKDVLVSTVEALNRRANVLGVSEPNIQIEGNNRIRVQLAGVTNQNRAREILATEAQLSFRDANDKELLNGADLVENGAKQTYDSTTNEPIVTIKLKDADKFGEVTKKVMKMAPNNQLVIWLDYDKGDSFKKEVQKEHPKFVSAPNVSQELNTTDVKIEGHFTAQEAKDLASILNAGALPVKLTEKYSTSVGAQFGQQALHDTVFAGIVGIAIIFLFMLFYYRLPGLIAVITLSVYIYITLQIFDWMNAVLTLPGIAALILGVGMAVDANIITYERIKEELKLGKSVRSAFRSGNRRSFATIFDANITTIIAAVVLFIFGTSSVKGFATMLILSILTSFITAVFLSRFLLALLVESRWLDRKKGWFGVNKKHIMDIQDTDENTEPHTPFQKWDFTSKRKYFFIFSSAVTVAGIIILLVFRLNLGIDFASGARIEVQSDHKLTTEQVEKDFESLGMDPDTVVLSGEKSNIGVARFVGVPDKETIAKVKTYFKDKYGSDPNVSTVSPTVGKELARNALYAVAIASIGIIIYVSIRFEYKMAIAAIASLLYDAFFIVTFFSITRLEVDVTFIAAILTIIGYSINDTIVTFDRVREHMKKRKPKTFADLNHIVNLSLQQTFTRSINTVLTVVIVVVTLLIFGASSITNFSIALLVGLLTGVYSSLYIAAQIWLAWKGRELKKDSAQ</sequence>